<gene>
    <name type="primary">ERP29</name>
</gene>
<reference key="1">
    <citation type="submission" date="1998-12" db="UniProtKB">
        <authorList>
            <person name="Hubbard M.J."/>
        </authorList>
    </citation>
    <scope>PROTEIN SEQUENCE</scope>
    <source>
        <tissue>Liver</tissue>
    </source>
</reference>
<keyword id="KW-0903">Direct protein sequencing</keyword>
<keyword id="KW-0256">Endoplasmic reticulum</keyword>
<keyword id="KW-0597">Phosphoprotein</keyword>
<protein>
    <recommendedName>
        <fullName>Endoplasmic reticulum resident protein 29</fullName>
        <shortName>ERp29</shortName>
    </recommendedName>
</protein>
<proteinExistence type="evidence at protein level"/>
<name>ERP29_TRIVU</name>
<accession>P81629</accession>
<dbReference type="GO" id="GO:0005788">
    <property type="term" value="C:endoplasmic reticulum lumen"/>
    <property type="evidence" value="ECO:0007669"/>
    <property type="project" value="UniProtKB-SubCell"/>
</dbReference>
<dbReference type="GO" id="GO:0042470">
    <property type="term" value="C:melanosome"/>
    <property type="evidence" value="ECO:0007669"/>
    <property type="project" value="UniProtKB-SubCell"/>
</dbReference>
<dbReference type="GO" id="GO:0009306">
    <property type="term" value="P:protein secretion"/>
    <property type="evidence" value="ECO:0007669"/>
    <property type="project" value="InterPro"/>
</dbReference>
<dbReference type="Gene3D" id="3.40.30.10">
    <property type="entry name" value="Glutaredoxin"/>
    <property type="match status" value="1"/>
</dbReference>
<dbReference type="InterPro" id="IPR012883">
    <property type="entry name" value="ERp29_N"/>
</dbReference>
<dbReference type="Pfam" id="PF07912">
    <property type="entry name" value="ERp29_N"/>
    <property type="match status" value="1"/>
</dbReference>
<feature type="chain" id="PRO_0000087032" description="Endoplasmic reticulum resident protein 29">
    <location>
        <begin position="1"/>
        <end position="32" status="greater than"/>
    </location>
</feature>
<feature type="modified residue" description="Phosphotyrosine; by PKDCC" evidence="2">
    <location>
        <position position="32"/>
    </location>
</feature>
<feature type="non-terminal residue">
    <location>
        <position position="32"/>
    </location>
</feature>
<sequence>LHTKGSVPLDTITFYKVIPKHKFVLVKFDTQY</sequence>
<comment type="function">
    <text evidence="1">Does not seem to be a disulfide isomerase. Plays an important role in the processing of secretory proteins within the ER (By similarity).</text>
</comment>
<comment type="subunit">
    <text evidence="1">Homodimer. Part of a large chaperone multiprotein complex comprising CABP1, DNAJB11, HSP90B1, HSPA5, HYOU, PDIA2, PDIA4, PPIB, SDF2L1, UGGT1 and very small amounts of ERP29, but not, or at very low levels, CALR nor CANX (By similarity).</text>
</comment>
<comment type="subcellular location">
    <subcellularLocation>
        <location>Endoplasmic reticulum lumen</location>
    </subcellularLocation>
    <subcellularLocation>
        <location evidence="1">Melanosome</location>
    </subcellularLocation>
</comment>
<organism>
    <name type="scientific">Trichosurus vulpecula</name>
    <name type="common">Brush-tailed possum</name>
    <dbReference type="NCBI Taxonomy" id="9337"/>
    <lineage>
        <taxon>Eukaryota</taxon>
        <taxon>Metazoa</taxon>
        <taxon>Chordata</taxon>
        <taxon>Craniata</taxon>
        <taxon>Vertebrata</taxon>
        <taxon>Euteleostomi</taxon>
        <taxon>Mammalia</taxon>
        <taxon>Metatheria</taxon>
        <taxon>Diprotodontia</taxon>
        <taxon>Phalangeridae</taxon>
        <taxon>Trichosurus</taxon>
    </lineage>
</organism>
<evidence type="ECO:0000250" key="1"/>
<evidence type="ECO:0000250" key="2">
    <source>
        <dbReference type="UniProtKB" id="P30040"/>
    </source>
</evidence>